<accession>A9BR96</accession>
<proteinExistence type="inferred from homology"/>
<protein>
    <recommendedName>
        <fullName evidence="1">Large ribosomal subunit protein uL10</fullName>
    </recommendedName>
    <alternativeName>
        <fullName evidence="2">50S ribosomal protein L10</fullName>
    </alternativeName>
</protein>
<evidence type="ECO:0000255" key="1">
    <source>
        <dbReference type="HAMAP-Rule" id="MF_00362"/>
    </source>
</evidence>
<evidence type="ECO:0000305" key="2"/>
<feature type="chain" id="PRO_1000120947" description="Large ribosomal subunit protein uL10">
    <location>
        <begin position="1"/>
        <end position="175"/>
    </location>
</feature>
<comment type="function">
    <text evidence="1">Forms part of the ribosomal stalk, playing a central role in the interaction of the ribosome with GTP-bound translation factors.</text>
</comment>
<comment type="subunit">
    <text evidence="1">Part of the ribosomal stalk of the 50S ribosomal subunit. The N-terminus interacts with L11 and the large rRNA to form the base of the stalk. The C-terminus forms an elongated spine to which L12 dimers bind in a sequential fashion forming a multimeric L10(L12)X complex.</text>
</comment>
<comment type="similarity">
    <text evidence="1">Belongs to the universal ribosomal protein uL10 family.</text>
</comment>
<organism>
    <name type="scientific">Delftia acidovorans (strain DSM 14801 / SPH-1)</name>
    <dbReference type="NCBI Taxonomy" id="398578"/>
    <lineage>
        <taxon>Bacteria</taxon>
        <taxon>Pseudomonadati</taxon>
        <taxon>Pseudomonadota</taxon>
        <taxon>Betaproteobacteria</taxon>
        <taxon>Burkholderiales</taxon>
        <taxon>Comamonadaceae</taxon>
        <taxon>Delftia</taxon>
    </lineage>
</organism>
<sequence length="175" mass="18102">MSLNRSEKEAVINEVTSLAAKAQTLVIAEYRGITVADMTKLRSDARSKGVSLSVLKNTLARRAVAGSQFDVVADQMTGPLIYGFSEDAVAAAKVVADFAKTNDKLVIRGGAFAGKALDVNGVKQLANIPSKEVLLAQLCGLLMSPISRTAVVLGALAAKKSEGSAEEPAAEAVAA</sequence>
<name>RL10_DELAS</name>
<dbReference type="EMBL" id="CP000884">
    <property type="protein sequence ID" value="ABX33154.1"/>
    <property type="molecule type" value="Genomic_DNA"/>
</dbReference>
<dbReference type="RefSeq" id="WP_012202440.1">
    <property type="nucleotide sequence ID" value="NC_010002.1"/>
</dbReference>
<dbReference type="SMR" id="A9BR96"/>
<dbReference type="STRING" id="398578.Daci_0508"/>
<dbReference type="GeneID" id="24117682"/>
<dbReference type="KEGG" id="dac:Daci_0508"/>
<dbReference type="eggNOG" id="COG0244">
    <property type="taxonomic scope" value="Bacteria"/>
</dbReference>
<dbReference type="HOGENOM" id="CLU_092227_0_1_4"/>
<dbReference type="Proteomes" id="UP000000784">
    <property type="component" value="Chromosome"/>
</dbReference>
<dbReference type="GO" id="GO:0015934">
    <property type="term" value="C:large ribosomal subunit"/>
    <property type="evidence" value="ECO:0007669"/>
    <property type="project" value="InterPro"/>
</dbReference>
<dbReference type="GO" id="GO:0070180">
    <property type="term" value="F:large ribosomal subunit rRNA binding"/>
    <property type="evidence" value="ECO:0007669"/>
    <property type="project" value="UniProtKB-UniRule"/>
</dbReference>
<dbReference type="GO" id="GO:0003735">
    <property type="term" value="F:structural constituent of ribosome"/>
    <property type="evidence" value="ECO:0007669"/>
    <property type="project" value="InterPro"/>
</dbReference>
<dbReference type="GO" id="GO:0006412">
    <property type="term" value="P:translation"/>
    <property type="evidence" value="ECO:0007669"/>
    <property type="project" value="UniProtKB-UniRule"/>
</dbReference>
<dbReference type="CDD" id="cd05797">
    <property type="entry name" value="Ribosomal_L10"/>
    <property type="match status" value="1"/>
</dbReference>
<dbReference type="Gene3D" id="3.30.70.1730">
    <property type="match status" value="1"/>
</dbReference>
<dbReference type="Gene3D" id="6.10.250.290">
    <property type="match status" value="1"/>
</dbReference>
<dbReference type="HAMAP" id="MF_00362">
    <property type="entry name" value="Ribosomal_uL10"/>
    <property type="match status" value="1"/>
</dbReference>
<dbReference type="InterPro" id="IPR001790">
    <property type="entry name" value="Ribosomal_uL10"/>
</dbReference>
<dbReference type="InterPro" id="IPR043141">
    <property type="entry name" value="Ribosomal_uL10-like_sf"/>
</dbReference>
<dbReference type="InterPro" id="IPR022973">
    <property type="entry name" value="Ribosomal_uL10_bac"/>
</dbReference>
<dbReference type="InterPro" id="IPR047865">
    <property type="entry name" value="Ribosomal_uL10_bac_type"/>
</dbReference>
<dbReference type="InterPro" id="IPR002363">
    <property type="entry name" value="Ribosomal_uL10_CS_bac"/>
</dbReference>
<dbReference type="NCBIfam" id="NF000955">
    <property type="entry name" value="PRK00099.1-1"/>
    <property type="match status" value="1"/>
</dbReference>
<dbReference type="PANTHER" id="PTHR11560">
    <property type="entry name" value="39S RIBOSOMAL PROTEIN L10, MITOCHONDRIAL"/>
    <property type="match status" value="1"/>
</dbReference>
<dbReference type="Pfam" id="PF00466">
    <property type="entry name" value="Ribosomal_L10"/>
    <property type="match status" value="1"/>
</dbReference>
<dbReference type="SUPFAM" id="SSF160369">
    <property type="entry name" value="Ribosomal protein L10-like"/>
    <property type="match status" value="1"/>
</dbReference>
<dbReference type="PROSITE" id="PS01109">
    <property type="entry name" value="RIBOSOMAL_L10"/>
    <property type="match status" value="1"/>
</dbReference>
<gene>
    <name evidence="1" type="primary">rplJ</name>
    <name type="ordered locus">Daci_0508</name>
</gene>
<keyword id="KW-1185">Reference proteome</keyword>
<keyword id="KW-0687">Ribonucleoprotein</keyword>
<keyword id="KW-0689">Ribosomal protein</keyword>
<keyword id="KW-0694">RNA-binding</keyword>
<keyword id="KW-0699">rRNA-binding</keyword>
<reference key="1">
    <citation type="submission" date="2007-11" db="EMBL/GenBank/DDBJ databases">
        <title>Complete sequence of Delftia acidovorans DSM 14801 / SPH-1.</title>
        <authorList>
            <person name="Copeland A."/>
            <person name="Lucas S."/>
            <person name="Lapidus A."/>
            <person name="Barry K."/>
            <person name="Glavina del Rio T."/>
            <person name="Dalin E."/>
            <person name="Tice H."/>
            <person name="Pitluck S."/>
            <person name="Lowry S."/>
            <person name="Clum A."/>
            <person name="Schmutz J."/>
            <person name="Larimer F."/>
            <person name="Land M."/>
            <person name="Hauser L."/>
            <person name="Kyrpides N."/>
            <person name="Kim E."/>
            <person name="Schleheck D."/>
            <person name="Richardson P."/>
        </authorList>
    </citation>
    <scope>NUCLEOTIDE SEQUENCE [LARGE SCALE GENOMIC DNA]</scope>
    <source>
        <strain>DSM 14801 / SPH-1</strain>
    </source>
</reference>